<sequence>MKDLTMLLDELKDMSFFNKGDICLIGCSTSEVIGEKIGTVGSMEVAETIFNALDVVSKETGVTFAFQGCEHINRAITIEKSQYNPLTMEEVSVVPDVHAGGSLATYAFQHMKDPIVVEHITVPCGIDIGQTLIGMHIKHVCVPVRTSVKQVGQAIVTIATSRPKKIGGERAKYK</sequence>
<reference key="1">
    <citation type="journal article" date="2001" name="Lancet">
        <title>Whole genome sequencing of meticillin-resistant Staphylococcus aureus.</title>
        <authorList>
            <person name="Kuroda M."/>
            <person name="Ohta T."/>
            <person name="Uchiyama I."/>
            <person name="Baba T."/>
            <person name="Yuzawa H."/>
            <person name="Kobayashi I."/>
            <person name="Cui L."/>
            <person name="Oguchi A."/>
            <person name="Aoki K."/>
            <person name="Nagai Y."/>
            <person name="Lian J.-Q."/>
            <person name="Ito T."/>
            <person name="Kanamori M."/>
            <person name="Matsumaru H."/>
            <person name="Maruyama A."/>
            <person name="Murakami H."/>
            <person name="Hosoyama A."/>
            <person name="Mizutani-Ui Y."/>
            <person name="Takahashi N.K."/>
            <person name="Sawano T."/>
            <person name="Inoue R."/>
            <person name="Kaito C."/>
            <person name="Sekimizu K."/>
            <person name="Hirakawa H."/>
            <person name="Kuhara S."/>
            <person name="Goto S."/>
            <person name="Yabuzaki J."/>
            <person name="Kanehisa M."/>
            <person name="Yamashita A."/>
            <person name="Oshima K."/>
            <person name="Furuya K."/>
            <person name="Yoshino C."/>
            <person name="Shiba T."/>
            <person name="Hattori M."/>
            <person name="Ogasawara N."/>
            <person name="Hayashi H."/>
            <person name="Hiramatsu K."/>
        </authorList>
    </citation>
    <scope>NUCLEOTIDE SEQUENCE [LARGE SCALE GENOMIC DNA]</scope>
    <source>
        <strain>Mu50 / ATCC 700699</strain>
    </source>
</reference>
<comment type="similarity">
    <text evidence="1">Belongs to the UPF0340 family.</text>
</comment>
<organism>
    <name type="scientific">Staphylococcus aureus (strain Mu50 / ATCC 700699)</name>
    <dbReference type="NCBI Taxonomy" id="158878"/>
    <lineage>
        <taxon>Bacteria</taxon>
        <taxon>Bacillati</taxon>
        <taxon>Bacillota</taxon>
        <taxon>Bacilli</taxon>
        <taxon>Bacillales</taxon>
        <taxon>Staphylococcaceae</taxon>
        <taxon>Staphylococcus</taxon>
    </lineage>
</organism>
<name>Y2114_STAAM</name>
<protein>
    <recommendedName>
        <fullName evidence="1">UPF0340 protein SAV2114</fullName>
    </recommendedName>
</protein>
<evidence type="ECO:0000255" key="1">
    <source>
        <dbReference type="HAMAP-Rule" id="MF_00800"/>
    </source>
</evidence>
<feature type="chain" id="PRO_0000213011" description="UPF0340 protein SAV2114">
    <location>
        <begin position="1"/>
        <end position="174"/>
    </location>
</feature>
<gene>
    <name type="ordered locus">SAV2114</name>
</gene>
<accession>Q99SE4</accession>
<dbReference type="EMBL" id="BA000017">
    <property type="protein sequence ID" value="BAB58276.1"/>
    <property type="molecule type" value="Genomic_DNA"/>
</dbReference>
<dbReference type="RefSeq" id="WP_000654184.1">
    <property type="nucleotide sequence ID" value="NC_002758.2"/>
</dbReference>
<dbReference type="SMR" id="Q99SE4"/>
<dbReference type="KEGG" id="sav:SAV2114"/>
<dbReference type="HOGENOM" id="CLU_106658_0_0_9"/>
<dbReference type="PhylomeDB" id="Q99SE4"/>
<dbReference type="Proteomes" id="UP000002481">
    <property type="component" value="Chromosome"/>
</dbReference>
<dbReference type="Gene3D" id="3.40.50.10360">
    <property type="entry name" value="Hypothetical protein TT1679"/>
    <property type="match status" value="1"/>
</dbReference>
<dbReference type="HAMAP" id="MF_00800">
    <property type="entry name" value="UPF0340"/>
    <property type="match status" value="1"/>
</dbReference>
<dbReference type="InterPro" id="IPR028345">
    <property type="entry name" value="Antibiotic_NAT-like"/>
</dbReference>
<dbReference type="InterPro" id="IPR006340">
    <property type="entry name" value="DUF436"/>
</dbReference>
<dbReference type="NCBIfam" id="TIGR01440">
    <property type="entry name" value="TIGR01440 family protein"/>
    <property type="match status" value="1"/>
</dbReference>
<dbReference type="Pfam" id="PF04260">
    <property type="entry name" value="DUF436"/>
    <property type="match status" value="1"/>
</dbReference>
<dbReference type="PIRSF" id="PIRSF007510">
    <property type="entry name" value="UCP007510"/>
    <property type="match status" value="1"/>
</dbReference>
<dbReference type="SUPFAM" id="SSF110710">
    <property type="entry name" value="TTHA0583/YokD-like"/>
    <property type="match status" value="1"/>
</dbReference>
<proteinExistence type="inferred from homology"/>